<comment type="function">
    <text evidence="1">Catalyzes the base-exchange of a guanine (G) residue with the queuine precursor 7-aminomethyl-7-deazaguanine (PreQ1) at position 34 (anticodon wobble position) in tRNAs with GU(N) anticodons (tRNA-Asp, -Asn, -His and -Tyr). Catalysis occurs through a double-displacement mechanism. The nucleophile active site attacks the C1' of nucleotide 34 to detach the guanine base from the RNA, forming a covalent enzyme-RNA intermediate. The proton acceptor active site deprotonates the incoming PreQ1, allowing a nucleophilic attack on the C1' of the ribose to form the product. After dissociation, two additional enzymatic reactions on the tRNA convert PreQ1 to queuine (Q), resulting in the hypermodified nucleoside queuosine (7-(((4,5-cis-dihydroxy-2-cyclopenten-1-yl)amino)methyl)-7-deazaguanosine).</text>
</comment>
<comment type="catalytic activity">
    <reaction evidence="1">
        <text>7-aminomethyl-7-carbaguanine + guanosine(34) in tRNA = 7-aminomethyl-7-carbaguanosine(34) in tRNA + guanine</text>
        <dbReference type="Rhea" id="RHEA:24104"/>
        <dbReference type="Rhea" id="RHEA-COMP:10341"/>
        <dbReference type="Rhea" id="RHEA-COMP:10342"/>
        <dbReference type="ChEBI" id="CHEBI:16235"/>
        <dbReference type="ChEBI" id="CHEBI:58703"/>
        <dbReference type="ChEBI" id="CHEBI:74269"/>
        <dbReference type="ChEBI" id="CHEBI:82833"/>
        <dbReference type="EC" id="2.4.2.29"/>
    </reaction>
</comment>
<comment type="cofactor">
    <cofactor evidence="1">
        <name>Zn(2+)</name>
        <dbReference type="ChEBI" id="CHEBI:29105"/>
    </cofactor>
    <text evidence="1">Binds 1 zinc ion per subunit.</text>
</comment>
<comment type="pathway">
    <text evidence="1">tRNA modification; tRNA-queuosine biosynthesis.</text>
</comment>
<comment type="subunit">
    <text evidence="1">Homodimer. Within each dimer, one monomer is responsible for RNA recognition and catalysis, while the other monomer binds to the replacement base PreQ1.</text>
</comment>
<comment type="similarity">
    <text evidence="1">Belongs to the queuine tRNA-ribosyltransferase family.</text>
</comment>
<name>TGT_BLOPB</name>
<keyword id="KW-0328">Glycosyltransferase</keyword>
<keyword id="KW-0479">Metal-binding</keyword>
<keyword id="KW-0671">Queuosine biosynthesis</keyword>
<keyword id="KW-1185">Reference proteome</keyword>
<keyword id="KW-0808">Transferase</keyword>
<keyword id="KW-0819">tRNA processing</keyword>
<keyword id="KW-0862">Zinc</keyword>
<dbReference type="EC" id="2.4.2.29" evidence="1"/>
<dbReference type="EMBL" id="CP000016">
    <property type="protein sequence ID" value="AAZ40867.1"/>
    <property type="molecule type" value="Genomic_DNA"/>
</dbReference>
<dbReference type="RefSeq" id="WP_011282774.1">
    <property type="nucleotide sequence ID" value="NC_007292.1"/>
</dbReference>
<dbReference type="SMR" id="Q493H3"/>
<dbReference type="STRING" id="291272.BPEN_236"/>
<dbReference type="KEGG" id="bpn:BPEN_236"/>
<dbReference type="eggNOG" id="COG0343">
    <property type="taxonomic scope" value="Bacteria"/>
</dbReference>
<dbReference type="HOGENOM" id="CLU_022060_0_1_6"/>
<dbReference type="OrthoDB" id="9805417at2"/>
<dbReference type="UniPathway" id="UPA00392"/>
<dbReference type="Proteomes" id="UP000007794">
    <property type="component" value="Chromosome"/>
</dbReference>
<dbReference type="GO" id="GO:0005829">
    <property type="term" value="C:cytosol"/>
    <property type="evidence" value="ECO:0007669"/>
    <property type="project" value="TreeGrafter"/>
</dbReference>
<dbReference type="GO" id="GO:0046872">
    <property type="term" value="F:metal ion binding"/>
    <property type="evidence" value="ECO:0007669"/>
    <property type="project" value="UniProtKB-KW"/>
</dbReference>
<dbReference type="GO" id="GO:0008479">
    <property type="term" value="F:tRNA-guanosine(34) queuine transglycosylase activity"/>
    <property type="evidence" value="ECO:0007669"/>
    <property type="project" value="UniProtKB-UniRule"/>
</dbReference>
<dbReference type="GO" id="GO:0008616">
    <property type="term" value="P:queuosine biosynthetic process"/>
    <property type="evidence" value="ECO:0007669"/>
    <property type="project" value="UniProtKB-UniRule"/>
</dbReference>
<dbReference type="GO" id="GO:0002099">
    <property type="term" value="P:tRNA wobble guanine modification"/>
    <property type="evidence" value="ECO:0007669"/>
    <property type="project" value="TreeGrafter"/>
</dbReference>
<dbReference type="GO" id="GO:0101030">
    <property type="term" value="P:tRNA-guanine transglycosylation"/>
    <property type="evidence" value="ECO:0007669"/>
    <property type="project" value="InterPro"/>
</dbReference>
<dbReference type="FunFam" id="3.20.20.105:FF:000001">
    <property type="entry name" value="Queuine tRNA-ribosyltransferase"/>
    <property type="match status" value="1"/>
</dbReference>
<dbReference type="Gene3D" id="3.20.20.105">
    <property type="entry name" value="Queuine tRNA-ribosyltransferase-like"/>
    <property type="match status" value="1"/>
</dbReference>
<dbReference type="HAMAP" id="MF_00168">
    <property type="entry name" value="Q_tRNA_Tgt"/>
    <property type="match status" value="1"/>
</dbReference>
<dbReference type="InterPro" id="IPR050076">
    <property type="entry name" value="ArchSynthase1/Queuine_TRR"/>
</dbReference>
<dbReference type="InterPro" id="IPR004803">
    <property type="entry name" value="TGT"/>
</dbReference>
<dbReference type="InterPro" id="IPR036511">
    <property type="entry name" value="TGT-like_sf"/>
</dbReference>
<dbReference type="InterPro" id="IPR002616">
    <property type="entry name" value="tRNA_ribo_trans-like"/>
</dbReference>
<dbReference type="NCBIfam" id="TIGR00430">
    <property type="entry name" value="Q_tRNA_tgt"/>
    <property type="match status" value="1"/>
</dbReference>
<dbReference type="NCBIfam" id="TIGR00449">
    <property type="entry name" value="tgt_general"/>
    <property type="match status" value="1"/>
</dbReference>
<dbReference type="PANTHER" id="PTHR46499">
    <property type="entry name" value="QUEUINE TRNA-RIBOSYLTRANSFERASE"/>
    <property type="match status" value="1"/>
</dbReference>
<dbReference type="PANTHER" id="PTHR46499:SF1">
    <property type="entry name" value="QUEUINE TRNA-RIBOSYLTRANSFERASE"/>
    <property type="match status" value="1"/>
</dbReference>
<dbReference type="Pfam" id="PF01702">
    <property type="entry name" value="TGT"/>
    <property type="match status" value="1"/>
</dbReference>
<dbReference type="SUPFAM" id="SSF51713">
    <property type="entry name" value="tRNA-guanine transglycosylase"/>
    <property type="match status" value="1"/>
</dbReference>
<reference key="1">
    <citation type="journal article" date="2005" name="Genome Res.">
        <title>Genome sequence of Blochmannia pennsylvanicus indicates parallel evolutionary trends among bacterial mutualists of insects.</title>
        <authorList>
            <person name="Degnan P.H."/>
            <person name="Lazarus A.B."/>
            <person name="Wernegreen J.J."/>
        </authorList>
    </citation>
    <scope>NUCLEOTIDE SEQUENCE [LARGE SCALE GENOMIC DNA]</scope>
    <source>
        <strain>BPEN</strain>
    </source>
</reference>
<accession>Q493H3</accession>
<proteinExistence type="inferred from homology"/>
<evidence type="ECO:0000255" key="1">
    <source>
        <dbReference type="HAMAP-Rule" id="MF_00168"/>
    </source>
</evidence>
<gene>
    <name evidence="1" type="primary">tgt</name>
    <name type="ordered locus">BPEN_236</name>
</gene>
<protein>
    <recommendedName>
        <fullName evidence="1">Queuine tRNA-ribosyltransferase</fullName>
        <ecNumber evidence="1">2.4.2.29</ecNumber>
    </recommendedName>
    <alternativeName>
        <fullName evidence="1">Guanine insertion enzyme</fullName>
    </alternativeName>
    <alternativeName>
        <fullName evidence="1">tRNA-guanine transglycosylase</fullName>
    </alternativeName>
</protein>
<organism>
    <name type="scientific">Blochmanniella pennsylvanica (strain BPEN)</name>
    <dbReference type="NCBI Taxonomy" id="291272"/>
    <lineage>
        <taxon>Bacteria</taxon>
        <taxon>Pseudomonadati</taxon>
        <taxon>Pseudomonadota</taxon>
        <taxon>Gammaproteobacteria</taxon>
        <taxon>Enterobacterales</taxon>
        <taxon>Enterobacteriaceae</taxon>
        <taxon>ant endosymbionts</taxon>
        <taxon>Candidatus Blochmanniella</taxon>
    </lineage>
</organism>
<feature type="chain" id="PRO_1000016766" description="Queuine tRNA-ribosyltransferase">
    <location>
        <begin position="1"/>
        <end position="368"/>
    </location>
</feature>
<feature type="region of interest" description="RNA binding; important for wobble base 34 recognition" evidence="1">
    <location>
        <begin position="269"/>
        <end position="273"/>
    </location>
</feature>
<feature type="active site" description="Proton acceptor" evidence="1">
    <location>
        <position position="89"/>
    </location>
</feature>
<feature type="active site" description="Nucleophile" evidence="1">
    <location>
        <position position="264"/>
    </location>
</feature>
<feature type="binding site" evidence="1">
    <location>
        <begin position="89"/>
        <end position="93"/>
    </location>
    <ligand>
        <name>substrate</name>
    </ligand>
</feature>
<feature type="binding site" evidence="1">
    <location>
        <position position="143"/>
    </location>
    <ligand>
        <name>substrate</name>
    </ligand>
</feature>
<feature type="binding site" evidence="1">
    <location>
        <position position="187"/>
    </location>
    <ligand>
        <name>substrate</name>
    </ligand>
</feature>
<feature type="binding site" evidence="1">
    <location>
        <position position="214"/>
    </location>
    <ligand>
        <name>substrate</name>
    </ligand>
</feature>
<feature type="binding site" evidence="1">
    <location>
        <position position="302"/>
    </location>
    <ligand>
        <name>Zn(2+)</name>
        <dbReference type="ChEBI" id="CHEBI:29105"/>
    </ligand>
</feature>
<feature type="binding site" evidence="1">
    <location>
        <position position="304"/>
    </location>
    <ligand>
        <name>Zn(2+)</name>
        <dbReference type="ChEBI" id="CHEBI:29105"/>
    </ligand>
</feature>
<feature type="binding site" evidence="1">
    <location>
        <position position="307"/>
    </location>
    <ligand>
        <name>Zn(2+)</name>
        <dbReference type="ChEBI" id="CHEBI:29105"/>
    </ligand>
</feature>
<feature type="binding site" evidence="1">
    <location>
        <position position="333"/>
    </location>
    <ligand>
        <name>Zn(2+)</name>
        <dbReference type="ChEBI" id="CHEBI:29105"/>
    </ligand>
</feature>
<sequence length="368" mass="41983">MPFQLLQTDGHARLGRLICNQGIVDTPAFMPVGTYGSIKTLTAKEVEASGTQIILSNTFHLWLRPGLDIIKLHGSLHKFMSWNGPIITDSGGFQVFSLSKTRTITRKGVGFKSPIDGHLVFLTPEKSIEIQHDLQSDIVMIFDECISYPNTWDYVKKSVNISLNWAERSRLRFDTLHNSNMLFAIIQGGMYENLRDMSAKELINIGFDGYAIGGLSVGEPKKEMYRILSHICKLIPTNKPRYLMGAGKPEDLLEAVQKGIDMFDCVIPTRNARNGYLFVSDGTIKIRNAQYKKDTSPLDGNCDCYTCQHYSRSYLHHLDCCKEILGVRLNTIHNLRYYQRLMEELRQAIKTKSLQNFIDIFYKRVNRI</sequence>